<feature type="chain" id="PRO_0000333081" description="Na(+)/H(+) antiporter NhaB">
    <location>
        <begin position="1"/>
        <end position="522"/>
    </location>
</feature>
<feature type="transmembrane region" description="Helical" evidence="1">
    <location>
        <begin position="25"/>
        <end position="45"/>
    </location>
</feature>
<feature type="transmembrane region" description="Helical" evidence="1">
    <location>
        <begin position="49"/>
        <end position="69"/>
    </location>
</feature>
<feature type="transmembrane region" description="Helical" evidence="1">
    <location>
        <begin position="87"/>
        <end position="107"/>
    </location>
</feature>
<feature type="transmembrane region" description="Helical" evidence="1">
    <location>
        <begin position="128"/>
        <end position="162"/>
    </location>
</feature>
<feature type="transmembrane region" description="Helical" evidence="1">
    <location>
        <begin position="201"/>
        <end position="221"/>
    </location>
</feature>
<feature type="transmembrane region" description="Helical" evidence="1">
    <location>
        <begin position="237"/>
        <end position="257"/>
    </location>
</feature>
<feature type="transmembrane region" description="Helical" evidence="1">
    <location>
        <begin position="302"/>
        <end position="322"/>
    </location>
</feature>
<feature type="transmembrane region" description="Helical" evidence="1">
    <location>
        <begin position="356"/>
        <end position="376"/>
    </location>
</feature>
<feature type="transmembrane region" description="Helical" evidence="1">
    <location>
        <begin position="388"/>
        <end position="408"/>
    </location>
</feature>
<feature type="transmembrane region" description="Helical" evidence="1">
    <location>
        <begin position="446"/>
        <end position="466"/>
    </location>
</feature>
<feature type="transmembrane region" description="Helical" evidence="1">
    <location>
        <begin position="476"/>
        <end position="496"/>
    </location>
</feature>
<dbReference type="EMBL" id="CP000746">
    <property type="protein sequence ID" value="ABR75235.1"/>
    <property type="molecule type" value="Genomic_DNA"/>
</dbReference>
<dbReference type="RefSeq" id="WP_012073612.1">
    <property type="nucleotide sequence ID" value="NC_009655.1"/>
</dbReference>
<dbReference type="SMR" id="A6VQI8"/>
<dbReference type="STRING" id="339671.Asuc_1886"/>
<dbReference type="KEGG" id="asu:Asuc_1886"/>
<dbReference type="eggNOG" id="COG3067">
    <property type="taxonomic scope" value="Bacteria"/>
</dbReference>
<dbReference type="HOGENOM" id="CLU_041110_0_0_6"/>
<dbReference type="OrthoDB" id="5288732at2"/>
<dbReference type="Proteomes" id="UP000001114">
    <property type="component" value="Chromosome"/>
</dbReference>
<dbReference type="GO" id="GO:0005886">
    <property type="term" value="C:plasma membrane"/>
    <property type="evidence" value="ECO:0007669"/>
    <property type="project" value="UniProtKB-SubCell"/>
</dbReference>
<dbReference type="GO" id="GO:0015385">
    <property type="term" value="F:sodium:proton antiporter activity"/>
    <property type="evidence" value="ECO:0007669"/>
    <property type="project" value="InterPro"/>
</dbReference>
<dbReference type="HAMAP" id="MF_01599">
    <property type="entry name" value="NhaB"/>
    <property type="match status" value="1"/>
</dbReference>
<dbReference type="InterPro" id="IPR004671">
    <property type="entry name" value="Na+/H+_antiporter_NhaB"/>
</dbReference>
<dbReference type="NCBIfam" id="TIGR00774">
    <property type="entry name" value="NhaB"/>
    <property type="match status" value="1"/>
</dbReference>
<dbReference type="NCBIfam" id="NF007093">
    <property type="entry name" value="PRK09547.1"/>
    <property type="match status" value="1"/>
</dbReference>
<dbReference type="PANTHER" id="PTHR43302:SF1">
    <property type="entry name" value="NA(+)_H(+) ANTIPORTER NHAB"/>
    <property type="match status" value="1"/>
</dbReference>
<dbReference type="PANTHER" id="PTHR43302">
    <property type="entry name" value="TRANSPORTER ARSB-RELATED"/>
    <property type="match status" value="1"/>
</dbReference>
<dbReference type="Pfam" id="PF06450">
    <property type="entry name" value="NhaB"/>
    <property type="match status" value="1"/>
</dbReference>
<name>NHAB_ACTSZ</name>
<proteinExistence type="inferred from homology"/>
<protein>
    <recommendedName>
        <fullName evidence="1">Na(+)/H(+) antiporter NhaB</fullName>
    </recommendedName>
    <alternativeName>
        <fullName evidence="1">Sodium/proton antiporter NhaB</fullName>
    </alternativeName>
</protein>
<comment type="function">
    <text evidence="1">Na(+)/H(+) antiporter that extrudes sodium in exchange for external protons.</text>
</comment>
<comment type="catalytic activity">
    <reaction evidence="1">
        <text>2 Na(+)(in) + 3 H(+)(out) = 2 Na(+)(out) + 3 H(+)(in)</text>
        <dbReference type="Rhea" id="RHEA:29247"/>
        <dbReference type="ChEBI" id="CHEBI:15378"/>
        <dbReference type="ChEBI" id="CHEBI:29101"/>
    </reaction>
    <physiologicalReaction direction="left-to-right" evidence="1">
        <dbReference type="Rhea" id="RHEA:29248"/>
    </physiologicalReaction>
</comment>
<comment type="subcellular location">
    <subcellularLocation>
        <location evidence="1">Cell inner membrane</location>
        <topology evidence="1">Multi-pass membrane protein</topology>
    </subcellularLocation>
</comment>
<comment type="similarity">
    <text evidence="1">Belongs to the NhaB Na(+)/H(+) (TC 2.A.34) antiporter family.</text>
</comment>
<sequence length="522" mass="57428">MKYIQAFMNNFLGNSPDWYKVTIGVFLVINPFIFWFHPFIAGWLLVAEFIFTLAMALKCYPLQPGGMLALEAVTIGMTSPEHVKAEILANFEVILLLMFMVAGIYFMKQLLLYAFTKLLLRIRSKLTLSLAFCLTAAFLSAFLDALTVIAVIISVAMGFYGVYHKVASGGTFNDPSDITNDAKIKQNMETLEQFRAFLRSLMMHAAVGTALGGVMTLVGEPQNLIIAEQAGWGFKEFFFRMSPVTLLTLISGVVTCITVERLRLCGYGEKLPRKVWGVLAKFDRAHEEQMTTQDRVKLGVQVFVGIWLIIGLAFHLASVGLIGLTVIILTTAYCGITDEHAIGRAFQESLPFLSLLVVFFSVVAVIIDQHLFAPVIELVLNASESVQLLLFYIFNGVLSAISDNVFVATVYINEAKNALTAGAISPYQFEMISVAINTGTNLPSVATPNGQAAFLFLLTSSISPLIRLSYGRMVYMALPYTIVLSIVGLLAVEYVLPGMTQWLAQVGLIESPHIPMTSVFGH</sequence>
<accession>A6VQI8</accession>
<reference key="1">
    <citation type="journal article" date="2010" name="BMC Genomics">
        <title>A genomic perspective on the potential of Actinobacillus succinogenes for industrial succinate production.</title>
        <authorList>
            <person name="McKinlay J.B."/>
            <person name="Laivenieks M."/>
            <person name="Schindler B.D."/>
            <person name="McKinlay A.A."/>
            <person name="Siddaramappa S."/>
            <person name="Challacombe J.F."/>
            <person name="Lowry S.R."/>
            <person name="Clum A."/>
            <person name="Lapidus A.L."/>
            <person name="Burkhart K.B."/>
            <person name="Harkins V."/>
            <person name="Vieille C."/>
        </authorList>
    </citation>
    <scope>NUCLEOTIDE SEQUENCE [LARGE SCALE GENOMIC DNA]</scope>
    <source>
        <strain>ATCC 55618 / DSM 22257 / CCUG 43843 / 130Z</strain>
    </source>
</reference>
<evidence type="ECO:0000255" key="1">
    <source>
        <dbReference type="HAMAP-Rule" id="MF_01599"/>
    </source>
</evidence>
<keyword id="KW-0050">Antiport</keyword>
<keyword id="KW-0997">Cell inner membrane</keyword>
<keyword id="KW-1003">Cell membrane</keyword>
<keyword id="KW-0406">Ion transport</keyword>
<keyword id="KW-0472">Membrane</keyword>
<keyword id="KW-1185">Reference proteome</keyword>
<keyword id="KW-0915">Sodium</keyword>
<keyword id="KW-0739">Sodium transport</keyword>
<keyword id="KW-0812">Transmembrane</keyword>
<keyword id="KW-1133">Transmembrane helix</keyword>
<keyword id="KW-0813">Transport</keyword>
<organism>
    <name type="scientific">Actinobacillus succinogenes (strain ATCC 55618 / DSM 22257 / CCUG 43843 / 130Z)</name>
    <dbReference type="NCBI Taxonomy" id="339671"/>
    <lineage>
        <taxon>Bacteria</taxon>
        <taxon>Pseudomonadati</taxon>
        <taxon>Pseudomonadota</taxon>
        <taxon>Gammaproteobacteria</taxon>
        <taxon>Pasteurellales</taxon>
        <taxon>Pasteurellaceae</taxon>
        <taxon>Actinobacillus</taxon>
    </lineage>
</organism>
<gene>
    <name evidence="1" type="primary">nhaB</name>
    <name type="ordered locus">Asuc_1886</name>
</gene>